<protein>
    <recommendedName>
        <fullName>Chitin synthase 1</fullName>
        <ecNumber>2.4.1.16</ecNumber>
    </recommendedName>
    <alternativeName>
        <fullName>Chitin-UDP acetyl-glucosaminyl transferase 1</fullName>
    </alternativeName>
    <alternativeName>
        <fullName>Class-I chitin synthase 1</fullName>
    </alternativeName>
</protein>
<sequence>DVLFARTMHGVFKNIEFMCTRKDSKTWGKDAWKKIVVCVVSDGRAKINPRTRAVLAGLGVYQDGIAKQQVNGKDVTAHIYEYTTQVGISLKKDIVTLTPKQQPVQLLFCLKEKNQKKINSHRWFFQAFGRVLDPNICVLLDAGTKPGKDSIYHLWKAFDLEPHCAGACGEIKAMLGPGGKNLVNPLVAT</sequence>
<gene>
    <name type="primary">chs1</name>
</gene>
<feature type="chain" id="PRO_0000193685" description="Chitin synthase 1">
    <location>
        <begin position="1" status="less than"/>
        <end position="189" status="greater than"/>
    </location>
</feature>
<feature type="non-terminal residue">
    <location>
        <position position="1"/>
    </location>
</feature>
<feature type="non-terminal residue">
    <location>
        <position position="189"/>
    </location>
</feature>
<reference key="1">
    <citation type="journal article" date="1994" name="Microbiology">
        <title>Characterization of chitin synthase from Botrytis cinerea.</title>
        <authorList>
            <person name="Causier B.E."/>
            <person name="Milling R.J."/>
            <person name="Foster S.G."/>
            <person name="Adams D.J."/>
        </authorList>
    </citation>
    <scope>NUCLEOTIDE SEQUENCE [GENOMIC DNA]</scope>
    <source>
        <strain>SCHBC1</strain>
    </source>
</reference>
<organism>
    <name type="scientific">Botryotinia fuckeliana</name>
    <name type="common">Noble rot fungus</name>
    <name type="synonym">Botrytis cinerea</name>
    <dbReference type="NCBI Taxonomy" id="40559"/>
    <lineage>
        <taxon>Eukaryota</taxon>
        <taxon>Fungi</taxon>
        <taxon>Dikarya</taxon>
        <taxon>Ascomycota</taxon>
        <taxon>Pezizomycotina</taxon>
        <taxon>Leotiomycetes</taxon>
        <taxon>Helotiales</taxon>
        <taxon>Sclerotiniaceae</taxon>
        <taxon>Botrytis</taxon>
    </lineage>
</organism>
<accession>P49603</accession>
<comment type="function">
    <text evidence="1">Polymerizes chitin, a structural polymer of the cell wall and septum, by transferring the sugar moiety of UDP-GlcNAc to the non-reducing end of the growing chitin polymer.</text>
</comment>
<comment type="catalytic activity">
    <reaction>
        <text>[(1-&gt;4)-N-acetyl-beta-D-glucosaminyl](n) + UDP-N-acetyl-alpha-D-glucosamine = [(1-&gt;4)-N-acetyl-beta-D-glucosaminyl](n+1) + UDP + H(+)</text>
        <dbReference type="Rhea" id="RHEA:16637"/>
        <dbReference type="Rhea" id="RHEA-COMP:9593"/>
        <dbReference type="Rhea" id="RHEA-COMP:9595"/>
        <dbReference type="ChEBI" id="CHEBI:15378"/>
        <dbReference type="ChEBI" id="CHEBI:17029"/>
        <dbReference type="ChEBI" id="CHEBI:57705"/>
        <dbReference type="ChEBI" id="CHEBI:58223"/>
        <dbReference type="EC" id="2.4.1.16"/>
    </reaction>
</comment>
<comment type="subcellular location">
    <subcellularLocation>
        <location evidence="1">Cell membrane</location>
        <topology evidence="1">Multi-pass membrane protein</topology>
    </subcellularLocation>
</comment>
<comment type="similarity">
    <text evidence="1">Belongs to the chitin synthase family. Class I subfamily.</text>
</comment>
<keyword id="KW-1003">Cell membrane</keyword>
<keyword id="KW-0961">Cell wall biogenesis/degradation</keyword>
<keyword id="KW-0328">Glycosyltransferase</keyword>
<keyword id="KW-0472">Membrane</keyword>
<keyword id="KW-0808">Transferase</keyword>
<keyword id="KW-0812">Transmembrane</keyword>
<evidence type="ECO:0000305" key="1"/>
<name>CHS1_BOTFU</name>
<dbReference type="EC" id="2.4.1.16"/>
<dbReference type="EMBL" id="X77937">
    <property type="protein sequence ID" value="CAA54909.1"/>
    <property type="molecule type" value="Genomic_DNA"/>
</dbReference>
<dbReference type="PIR" id="S42870">
    <property type="entry name" value="S42870"/>
</dbReference>
<dbReference type="SMR" id="P49603"/>
<dbReference type="CAZy" id="GT2">
    <property type="family name" value="Glycosyltransferase Family 2"/>
</dbReference>
<dbReference type="PHI-base" id="PHI:276"/>
<dbReference type="GO" id="GO:0030428">
    <property type="term" value="C:cell septum"/>
    <property type="evidence" value="ECO:0007669"/>
    <property type="project" value="TreeGrafter"/>
</dbReference>
<dbReference type="GO" id="GO:0005886">
    <property type="term" value="C:plasma membrane"/>
    <property type="evidence" value="ECO:0007669"/>
    <property type="project" value="UniProtKB-SubCell"/>
</dbReference>
<dbReference type="GO" id="GO:0004100">
    <property type="term" value="F:chitin synthase activity"/>
    <property type="evidence" value="ECO:0007669"/>
    <property type="project" value="UniProtKB-EC"/>
</dbReference>
<dbReference type="GO" id="GO:0071555">
    <property type="term" value="P:cell wall organization"/>
    <property type="evidence" value="ECO:0007669"/>
    <property type="project" value="UniProtKB-KW"/>
</dbReference>
<dbReference type="GO" id="GO:0006031">
    <property type="term" value="P:chitin biosynthetic process"/>
    <property type="evidence" value="ECO:0007669"/>
    <property type="project" value="InterPro"/>
</dbReference>
<dbReference type="InterPro" id="IPR004835">
    <property type="entry name" value="Chitin_synth"/>
</dbReference>
<dbReference type="InterPro" id="IPR004834">
    <property type="entry name" value="Chitin_synth_fun"/>
</dbReference>
<dbReference type="PANTHER" id="PTHR22914">
    <property type="entry name" value="CHITIN SYNTHASE"/>
    <property type="match status" value="1"/>
</dbReference>
<dbReference type="PANTHER" id="PTHR22914:SF9">
    <property type="entry name" value="CHITIN SYNTHASE 1"/>
    <property type="match status" value="1"/>
</dbReference>
<dbReference type="Pfam" id="PF01644">
    <property type="entry name" value="Chitin_synth_1"/>
    <property type="match status" value="1"/>
</dbReference>
<proteinExistence type="inferred from homology"/>